<keyword id="KW-0251">Elongation factor</keyword>
<keyword id="KW-0496">Mitochondrion</keyword>
<keyword id="KW-0648">Protein biosynthesis</keyword>
<keyword id="KW-1185">Reference proteome</keyword>
<keyword id="KW-0809">Transit peptide</keyword>
<sequence length="310" mass="34238">MGFQVLRSVIQAPLAKRSFLCKSCPSGLRVLYNNILLSSRSYSTKGSAFTLIKKLRQETNAPIFLIKEAVEETNGQSFFEAKSVLSEKMKARGQRLAQQLQGRVAKQGWICTAILPDAQAACMLELNCESDFVAQNPKIQRLALSSASSILHSLNRVNADSTEQRNVSTDLDSLKKIILHSDKDSSSNLGNTLFDAFSNATSTTGERIELSRAIVFQRTKPQHQLGRYTHGTDVRVHSSLGRVGCLVSLSNAQKAGLADDIAREFVAQDPESIDDFLHNTSVYDNSKTMKDLLGSANVVDWVRWERGQAQ</sequence>
<protein>
    <recommendedName>
        <fullName evidence="1">Elongation factor Ts, mitochondrial</fullName>
        <shortName evidence="1">EF-Ts</shortName>
        <shortName evidence="1">EF-TsMt</shortName>
    </recommendedName>
</protein>
<reference key="1">
    <citation type="journal article" date="2011" name="Science">
        <title>Comparative functional genomics of the fission yeasts.</title>
        <authorList>
            <person name="Rhind N."/>
            <person name="Chen Z."/>
            <person name="Yassour M."/>
            <person name="Thompson D.A."/>
            <person name="Haas B.J."/>
            <person name="Habib N."/>
            <person name="Wapinski I."/>
            <person name="Roy S."/>
            <person name="Lin M.F."/>
            <person name="Heiman D.I."/>
            <person name="Young S.K."/>
            <person name="Furuya K."/>
            <person name="Guo Y."/>
            <person name="Pidoux A."/>
            <person name="Chen H.M."/>
            <person name="Robbertse B."/>
            <person name="Goldberg J.M."/>
            <person name="Aoki K."/>
            <person name="Bayne E.H."/>
            <person name="Berlin A.M."/>
            <person name="Desjardins C.A."/>
            <person name="Dobbs E."/>
            <person name="Dukaj L."/>
            <person name="Fan L."/>
            <person name="FitzGerald M.G."/>
            <person name="French C."/>
            <person name="Gujja S."/>
            <person name="Hansen K."/>
            <person name="Keifenheim D."/>
            <person name="Levin J.Z."/>
            <person name="Mosher R.A."/>
            <person name="Mueller C.A."/>
            <person name="Pfiffner J."/>
            <person name="Priest M."/>
            <person name="Russ C."/>
            <person name="Smialowska A."/>
            <person name="Swoboda P."/>
            <person name="Sykes S.M."/>
            <person name="Vaughn M."/>
            <person name="Vengrova S."/>
            <person name="Yoder R."/>
            <person name="Zeng Q."/>
            <person name="Allshire R."/>
            <person name="Baulcombe D."/>
            <person name="Birren B.W."/>
            <person name="Brown W."/>
            <person name="Ekwall K."/>
            <person name="Kellis M."/>
            <person name="Leatherwood J."/>
            <person name="Levin H."/>
            <person name="Margalit H."/>
            <person name="Martienssen R."/>
            <person name="Nieduszynski C.A."/>
            <person name="Spatafora J.W."/>
            <person name="Friedman N."/>
            <person name="Dalgaard J.Z."/>
            <person name="Baumann P."/>
            <person name="Niki H."/>
            <person name="Regev A."/>
            <person name="Nusbaum C."/>
        </authorList>
    </citation>
    <scope>NUCLEOTIDE SEQUENCE [LARGE SCALE GENOMIC DNA]</scope>
    <source>
        <strain>yFS275 / FY16936</strain>
    </source>
</reference>
<evidence type="ECO:0000255" key="1">
    <source>
        <dbReference type="HAMAP-Rule" id="MF_03135"/>
    </source>
</evidence>
<accession>B6K2P1</accession>
<feature type="transit peptide" description="Mitochondrion" evidence="1">
    <location>
        <begin position="1"/>
        <end position="42"/>
    </location>
</feature>
<feature type="chain" id="PRO_0000402349" description="Elongation factor Ts, mitochondrial">
    <location>
        <begin position="43"/>
        <end position="310"/>
    </location>
</feature>
<gene>
    <name type="primary">tsf1</name>
    <name type="ORF">SJAG_05271</name>
</gene>
<name>EFTS_SCHJY</name>
<comment type="function">
    <text evidence="1">Associates with the EF-Tu.GDP complex and induces the exchange of GDP to GTP. It remains bound to the aminoacyl-tRNA.EF-Tu.GTP complex up to the GTP hydrolysis stage on the ribosome.</text>
</comment>
<comment type="subcellular location">
    <subcellularLocation>
        <location evidence="1">Mitochondrion</location>
    </subcellularLocation>
</comment>
<comment type="similarity">
    <text evidence="1">Belongs to the EF-Ts family.</text>
</comment>
<dbReference type="EMBL" id="KE651166">
    <property type="protein sequence ID" value="EEB07422.1"/>
    <property type="molecule type" value="Genomic_DNA"/>
</dbReference>
<dbReference type="RefSeq" id="XP_002173715.1">
    <property type="nucleotide sequence ID" value="XM_002173679.1"/>
</dbReference>
<dbReference type="SMR" id="B6K2P1"/>
<dbReference type="STRING" id="402676.B6K2P1"/>
<dbReference type="EnsemblFungi" id="EEB07422">
    <property type="protein sequence ID" value="EEB07422"/>
    <property type="gene ID" value="SJAG_05271"/>
</dbReference>
<dbReference type="GeneID" id="7051135"/>
<dbReference type="JaponicusDB" id="SJAG_05271">
    <property type="gene designation" value="tsf1"/>
</dbReference>
<dbReference type="VEuPathDB" id="FungiDB:SJAG_05271"/>
<dbReference type="eggNOG" id="KOG1071">
    <property type="taxonomic scope" value="Eukaryota"/>
</dbReference>
<dbReference type="HOGENOM" id="CLU_940600_0_0_1"/>
<dbReference type="OMA" id="QGWISQC"/>
<dbReference type="OrthoDB" id="277235at2759"/>
<dbReference type="Proteomes" id="UP000001744">
    <property type="component" value="Unassembled WGS sequence"/>
</dbReference>
<dbReference type="GO" id="GO:0005739">
    <property type="term" value="C:mitochondrion"/>
    <property type="evidence" value="ECO:0007669"/>
    <property type="project" value="UniProtKB-SubCell"/>
</dbReference>
<dbReference type="GO" id="GO:0003746">
    <property type="term" value="F:translation elongation factor activity"/>
    <property type="evidence" value="ECO:0000318"/>
    <property type="project" value="GO_Central"/>
</dbReference>
<dbReference type="GO" id="GO:0070125">
    <property type="term" value="P:mitochondrial translational elongation"/>
    <property type="evidence" value="ECO:0000318"/>
    <property type="project" value="GO_Central"/>
</dbReference>
<dbReference type="Gene3D" id="1.10.8.10">
    <property type="entry name" value="DNA helicase RuvA subunit, C-terminal domain"/>
    <property type="match status" value="1"/>
</dbReference>
<dbReference type="Gene3D" id="3.30.479.20">
    <property type="entry name" value="Elongation factor Ts, dimerisation domain"/>
    <property type="match status" value="1"/>
</dbReference>
<dbReference type="HAMAP" id="MF_00050">
    <property type="entry name" value="EF_Ts"/>
    <property type="match status" value="1"/>
</dbReference>
<dbReference type="InterPro" id="IPR036402">
    <property type="entry name" value="EF-Ts_dimer_sf"/>
</dbReference>
<dbReference type="InterPro" id="IPR001816">
    <property type="entry name" value="Transl_elong_EFTs/EF1B"/>
</dbReference>
<dbReference type="InterPro" id="IPR014039">
    <property type="entry name" value="Transl_elong_EFTs/EF1B_dimer"/>
</dbReference>
<dbReference type="PANTHER" id="PTHR11741">
    <property type="entry name" value="ELONGATION FACTOR TS"/>
    <property type="match status" value="1"/>
</dbReference>
<dbReference type="PANTHER" id="PTHR11741:SF0">
    <property type="entry name" value="ELONGATION FACTOR TS, MITOCHONDRIAL"/>
    <property type="match status" value="1"/>
</dbReference>
<dbReference type="Pfam" id="PF00889">
    <property type="entry name" value="EF_TS"/>
    <property type="match status" value="1"/>
</dbReference>
<dbReference type="SUPFAM" id="SSF54713">
    <property type="entry name" value="Elongation factor Ts (EF-Ts), dimerisation domain"/>
    <property type="match status" value="1"/>
</dbReference>
<proteinExistence type="inferred from homology"/>
<organism>
    <name type="scientific">Schizosaccharomyces japonicus (strain yFS275 / FY16936)</name>
    <name type="common">Fission yeast</name>
    <dbReference type="NCBI Taxonomy" id="402676"/>
    <lineage>
        <taxon>Eukaryota</taxon>
        <taxon>Fungi</taxon>
        <taxon>Dikarya</taxon>
        <taxon>Ascomycota</taxon>
        <taxon>Taphrinomycotina</taxon>
        <taxon>Schizosaccharomycetes</taxon>
        <taxon>Schizosaccharomycetales</taxon>
        <taxon>Schizosaccharomycetaceae</taxon>
        <taxon>Schizosaccharomyces</taxon>
    </lineage>
</organism>